<keyword id="KW-0025">Alternative splicing</keyword>
<keyword id="KW-0963">Cytoplasm</keyword>
<keyword id="KW-0539">Nucleus</keyword>
<keyword id="KW-0597">Phosphoprotein</keyword>
<keyword id="KW-1185">Reference proteome</keyword>
<evidence type="ECO:0000250" key="1">
    <source>
        <dbReference type="UniProtKB" id="Q86X51"/>
    </source>
</evidence>
<evidence type="ECO:0000256" key="2">
    <source>
        <dbReference type="SAM" id="MobiDB-lite"/>
    </source>
</evidence>
<evidence type="ECO:0000269" key="3">
    <source>
    </source>
</evidence>
<evidence type="ECO:0000269" key="4">
    <source>
    </source>
</evidence>
<evidence type="ECO:0000303" key="5">
    <source>
    </source>
</evidence>
<evidence type="ECO:0000305" key="6"/>
<evidence type="ECO:0000312" key="7">
    <source>
        <dbReference type="EMBL" id="AAI00378.1"/>
    </source>
</evidence>
<evidence type="ECO:0000312" key="8">
    <source>
        <dbReference type="EMBL" id="BAE22770.1"/>
    </source>
</evidence>
<evidence type="ECO:0000312" key="9">
    <source>
        <dbReference type="EMBL" id="BAE38919.1"/>
    </source>
</evidence>
<evidence type="ECO:0000312" key="10">
    <source>
        <dbReference type="EMBL" id="QDN53947.1"/>
    </source>
</evidence>
<evidence type="ECO:0000312" key="11">
    <source>
        <dbReference type="MGI" id="MGI:2147968"/>
    </source>
</evidence>
<evidence type="ECO:0000312" key="12">
    <source>
        <dbReference type="Proteomes" id="UP000000589"/>
    </source>
</evidence>
<evidence type="ECO:0007744" key="13">
    <source>
    </source>
</evidence>
<gene>
    <name evidence="5 11" type="primary">Ezhip</name>
    <name evidence="11" type="synonym">AU022751</name>
    <name evidence="10" type="synonym">KIP75</name>
</gene>
<organism evidence="12">
    <name type="scientific">Mus musculus</name>
    <name type="common">Mouse</name>
    <dbReference type="NCBI Taxonomy" id="10090"/>
    <lineage>
        <taxon>Eukaryota</taxon>
        <taxon>Metazoa</taxon>
        <taxon>Chordata</taxon>
        <taxon>Craniata</taxon>
        <taxon>Vertebrata</taxon>
        <taxon>Euteleostomi</taxon>
        <taxon>Mammalia</taxon>
        <taxon>Eutheria</taxon>
        <taxon>Euarchontoglires</taxon>
        <taxon>Glires</taxon>
        <taxon>Rodentia</taxon>
        <taxon>Myomorpha</taxon>
        <taxon>Muroidea</taxon>
        <taxon>Muridae</taxon>
        <taxon>Murinae</taxon>
        <taxon>Mus</taxon>
        <taxon>Mus</taxon>
    </lineage>
</organism>
<name>EZHIP_MOUSE</name>
<accession>B1B0V2</accession>
<accession>Q3TL73</accession>
<accession>Q3UWZ4</accession>
<accession>Q497U5</accession>
<proteinExistence type="evidence at protein level"/>
<protein>
    <recommendedName>
        <fullName evidence="5">EZH inhibitory protein</fullName>
    </recommendedName>
    <alternativeName>
        <fullName evidence="10">K27M-like inhibitor of PRC2</fullName>
    </alternativeName>
</protein>
<reference evidence="10" key="1">
    <citation type="journal article" date="2019" name="Nat. Commun.">
        <title>PFA ependymoma-associated protein EZHIP inhibits PRC2 activity through a H3 K27M-like mechanism.</title>
        <authorList>
            <person name="Jain S.U."/>
            <person name="Do T.J."/>
            <person name="Lund P.J."/>
            <person name="Rashoff A.Q."/>
            <person name="Diehl K.L."/>
            <person name="Cieslik M."/>
            <person name="Bajic A."/>
            <person name="Juretic N."/>
            <person name="Deshmukh S."/>
            <person name="Venneti S."/>
            <person name="Muir T.W."/>
            <person name="Garcia B.A."/>
            <person name="Jabado N."/>
            <person name="Lewis P.W."/>
        </authorList>
    </citation>
    <scope>NUCLEOTIDE SEQUENCE [MRNA] (ISOFORM 1)</scope>
    <scope>FUNCTION</scope>
</reference>
<reference evidence="12" key="2">
    <citation type="journal article" date="2009" name="PLoS Biol.">
        <title>Lineage-specific biology revealed by a finished genome assembly of the mouse.</title>
        <authorList>
            <person name="Church D.M."/>
            <person name="Goodstadt L."/>
            <person name="Hillier L.W."/>
            <person name="Zody M.C."/>
            <person name="Goldstein S."/>
            <person name="She X."/>
            <person name="Bult C.J."/>
            <person name="Agarwala R."/>
            <person name="Cherry J.L."/>
            <person name="DiCuccio M."/>
            <person name="Hlavina W."/>
            <person name="Kapustin Y."/>
            <person name="Meric P."/>
            <person name="Maglott D."/>
            <person name="Birtle Z."/>
            <person name="Marques A.C."/>
            <person name="Graves T."/>
            <person name="Zhou S."/>
            <person name="Teague B."/>
            <person name="Potamousis K."/>
            <person name="Churas C."/>
            <person name="Place M."/>
            <person name="Herschleb J."/>
            <person name="Runnheim R."/>
            <person name="Forrest D."/>
            <person name="Amos-Landgraf J."/>
            <person name="Schwartz D.C."/>
            <person name="Cheng Z."/>
            <person name="Lindblad-Toh K."/>
            <person name="Eichler E.E."/>
            <person name="Ponting C.P."/>
        </authorList>
    </citation>
    <scope>NUCLEOTIDE SEQUENCE [LARGE SCALE GENOMIC DNA]</scope>
    <source>
        <strain evidence="12">C57BL/6J</strain>
    </source>
</reference>
<reference evidence="8" key="3">
    <citation type="journal article" date="2005" name="Science">
        <title>The transcriptional landscape of the mammalian genome.</title>
        <authorList>
            <person name="Carninci P."/>
            <person name="Kasukawa T."/>
            <person name="Katayama S."/>
            <person name="Gough J."/>
            <person name="Frith M.C."/>
            <person name="Maeda N."/>
            <person name="Oyama R."/>
            <person name="Ravasi T."/>
            <person name="Lenhard B."/>
            <person name="Wells C."/>
            <person name="Kodzius R."/>
            <person name="Shimokawa K."/>
            <person name="Bajic V.B."/>
            <person name="Brenner S.E."/>
            <person name="Batalov S."/>
            <person name="Forrest A.R."/>
            <person name="Zavolan M."/>
            <person name="Davis M.J."/>
            <person name="Wilming L.G."/>
            <person name="Aidinis V."/>
            <person name="Allen J.E."/>
            <person name="Ambesi-Impiombato A."/>
            <person name="Apweiler R."/>
            <person name="Aturaliya R.N."/>
            <person name="Bailey T.L."/>
            <person name="Bansal M."/>
            <person name="Baxter L."/>
            <person name="Beisel K.W."/>
            <person name="Bersano T."/>
            <person name="Bono H."/>
            <person name="Chalk A.M."/>
            <person name="Chiu K.P."/>
            <person name="Choudhary V."/>
            <person name="Christoffels A."/>
            <person name="Clutterbuck D.R."/>
            <person name="Crowe M.L."/>
            <person name="Dalla E."/>
            <person name="Dalrymple B.P."/>
            <person name="de Bono B."/>
            <person name="Della Gatta G."/>
            <person name="di Bernardo D."/>
            <person name="Down T."/>
            <person name="Engstrom P."/>
            <person name="Fagiolini M."/>
            <person name="Faulkner G."/>
            <person name="Fletcher C.F."/>
            <person name="Fukushima T."/>
            <person name="Furuno M."/>
            <person name="Futaki S."/>
            <person name="Gariboldi M."/>
            <person name="Georgii-Hemming P."/>
            <person name="Gingeras T.R."/>
            <person name="Gojobori T."/>
            <person name="Green R.E."/>
            <person name="Gustincich S."/>
            <person name="Harbers M."/>
            <person name="Hayashi Y."/>
            <person name="Hensch T.K."/>
            <person name="Hirokawa N."/>
            <person name="Hill D."/>
            <person name="Huminiecki L."/>
            <person name="Iacono M."/>
            <person name="Ikeo K."/>
            <person name="Iwama A."/>
            <person name="Ishikawa T."/>
            <person name="Jakt M."/>
            <person name="Kanapin A."/>
            <person name="Katoh M."/>
            <person name="Kawasawa Y."/>
            <person name="Kelso J."/>
            <person name="Kitamura H."/>
            <person name="Kitano H."/>
            <person name="Kollias G."/>
            <person name="Krishnan S.P."/>
            <person name="Kruger A."/>
            <person name="Kummerfeld S.K."/>
            <person name="Kurochkin I.V."/>
            <person name="Lareau L.F."/>
            <person name="Lazarevic D."/>
            <person name="Lipovich L."/>
            <person name="Liu J."/>
            <person name="Liuni S."/>
            <person name="McWilliam S."/>
            <person name="Madan Babu M."/>
            <person name="Madera M."/>
            <person name="Marchionni L."/>
            <person name="Matsuda H."/>
            <person name="Matsuzawa S."/>
            <person name="Miki H."/>
            <person name="Mignone F."/>
            <person name="Miyake S."/>
            <person name="Morris K."/>
            <person name="Mottagui-Tabar S."/>
            <person name="Mulder N."/>
            <person name="Nakano N."/>
            <person name="Nakauchi H."/>
            <person name="Ng P."/>
            <person name="Nilsson R."/>
            <person name="Nishiguchi S."/>
            <person name="Nishikawa S."/>
            <person name="Nori F."/>
            <person name="Ohara O."/>
            <person name="Okazaki Y."/>
            <person name="Orlando V."/>
            <person name="Pang K.C."/>
            <person name="Pavan W.J."/>
            <person name="Pavesi G."/>
            <person name="Pesole G."/>
            <person name="Petrovsky N."/>
            <person name="Piazza S."/>
            <person name="Reed J."/>
            <person name="Reid J.F."/>
            <person name="Ring B.Z."/>
            <person name="Ringwald M."/>
            <person name="Rost B."/>
            <person name="Ruan Y."/>
            <person name="Salzberg S.L."/>
            <person name="Sandelin A."/>
            <person name="Schneider C."/>
            <person name="Schoenbach C."/>
            <person name="Sekiguchi K."/>
            <person name="Semple C.A."/>
            <person name="Seno S."/>
            <person name="Sessa L."/>
            <person name="Sheng Y."/>
            <person name="Shibata Y."/>
            <person name="Shimada H."/>
            <person name="Shimada K."/>
            <person name="Silva D."/>
            <person name="Sinclair B."/>
            <person name="Sperling S."/>
            <person name="Stupka E."/>
            <person name="Sugiura K."/>
            <person name="Sultana R."/>
            <person name="Takenaka Y."/>
            <person name="Taki K."/>
            <person name="Tammoja K."/>
            <person name="Tan S.L."/>
            <person name="Tang S."/>
            <person name="Taylor M.S."/>
            <person name="Tegner J."/>
            <person name="Teichmann S.A."/>
            <person name="Ueda H.R."/>
            <person name="van Nimwegen E."/>
            <person name="Verardo R."/>
            <person name="Wei C.L."/>
            <person name="Yagi K."/>
            <person name="Yamanishi H."/>
            <person name="Zabarovsky E."/>
            <person name="Zhu S."/>
            <person name="Zimmer A."/>
            <person name="Hide W."/>
            <person name="Bult C."/>
            <person name="Grimmond S.M."/>
            <person name="Teasdale R.D."/>
            <person name="Liu E.T."/>
            <person name="Brusic V."/>
            <person name="Quackenbush J."/>
            <person name="Wahlestedt C."/>
            <person name="Mattick J.S."/>
            <person name="Hume D.A."/>
            <person name="Kai C."/>
            <person name="Sasaki D."/>
            <person name="Tomaru Y."/>
            <person name="Fukuda S."/>
            <person name="Kanamori-Katayama M."/>
            <person name="Suzuki M."/>
            <person name="Aoki J."/>
            <person name="Arakawa T."/>
            <person name="Iida J."/>
            <person name="Imamura K."/>
            <person name="Itoh M."/>
            <person name="Kato T."/>
            <person name="Kawaji H."/>
            <person name="Kawagashira N."/>
            <person name="Kawashima T."/>
            <person name="Kojima M."/>
            <person name="Kondo S."/>
            <person name="Konno H."/>
            <person name="Nakano K."/>
            <person name="Ninomiya N."/>
            <person name="Nishio T."/>
            <person name="Okada M."/>
            <person name="Plessy C."/>
            <person name="Shibata K."/>
            <person name="Shiraki T."/>
            <person name="Suzuki S."/>
            <person name="Tagami M."/>
            <person name="Waki K."/>
            <person name="Watahiki A."/>
            <person name="Okamura-Oho Y."/>
            <person name="Suzuki H."/>
            <person name="Kawai J."/>
            <person name="Hayashizaki Y."/>
        </authorList>
    </citation>
    <scope>NUCLEOTIDE SEQUENCE [LARGE SCALE MRNA] (ISOFORM 2)</scope>
    <source>
        <strain evidence="8">C57BL/6J</strain>
        <tissue evidence="9">Embryo</tissue>
    </source>
</reference>
<reference evidence="7" key="4">
    <citation type="journal article" date="2004" name="Genome Res.">
        <title>The status, quality, and expansion of the NIH full-length cDNA project: the Mammalian Gene Collection (MGC).</title>
        <authorList>
            <consortium name="The MGC Project Team"/>
        </authorList>
    </citation>
    <scope>NUCLEOTIDE SEQUENCE [LARGE SCALE MRNA] (ISOFORM 1)</scope>
    <source>
        <tissue evidence="7">Oocyte</tissue>
    </source>
</reference>
<reference evidence="13" key="5">
    <citation type="journal article" date="2010" name="Cell">
        <title>A tissue-specific atlas of mouse protein phosphorylation and expression.</title>
        <authorList>
            <person name="Huttlin E.L."/>
            <person name="Jedrychowski M.P."/>
            <person name="Elias J.E."/>
            <person name="Goswami T."/>
            <person name="Rad R."/>
            <person name="Beausoleil S.A."/>
            <person name="Villen J."/>
            <person name="Haas W."/>
            <person name="Sowa M.E."/>
            <person name="Gygi S.P."/>
        </authorList>
    </citation>
    <scope>IDENTIFICATION BY MASS SPECTROMETRY [LARGE SCALE ANALYSIS]</scope>
</reference>
<reference evidence="6" key="6">
    <citation type="journal article" date="2019" name="Nat. Commun.">
        <title>EZHIP constrains Polycomb Repressive Complex 2 activity in germ cells.</title>
        <authorList>
            <person name="Ragazzini R."/>
            <person name="Perez-Palacios R."/>
            <person name="Baymaz I.H."/>
            <person name="Diop S."/>
            <person name="Ancelin K."/>
            <person name="Zielinski D."/>
            <person name="Michaud A."/>
            <person name="Givelet M."/>
            <person name="Borsos M."/>
            <person name="Aflaki S."/>
            <person name="Legoix P."/>
            <person name="Jansen P.W.T.C."/>
            <person name="Servant N."/>
            <person name="Torres-Padilla M.E."/>
            <person name="Bourc'his D."/>
            <person name="Fouchet P."/>
            <person name="Vermeulen M."/>
            <person name="Margueron R."/>
        </authorList>
    </citation>
    <scope>IDENTIFICATION BY MASS SPECTROMETRY</scope>
    <scope>FUNCTION</scope>
    <scope>INTERACTION WITH EZH1 AND EZH2</scope>
    <scope>TISSUE SPECIFICITY</scope>
    <scope>DISRUPTION PHENOTYPE</scope>
</reference>
<sequence>MASSSSPERGLEALRDTDESEGEAPGPSGPRGRGGPSGAGSALRLRSLEAEMAAACVTSTAGEDLGTFSEPGSQHGDPEGGGGPDLELGHARPMMRSQRELGLTPKGGGKADQGGKGRKGGSGSPPHTKSSRKREQPNPNRSLMAQGAAGPPLPGARGSPAMPQPESSLSPRPDQSHHFDFPVGNLEAPGPTLRSSTSQGSGSTPVPEALRCAESSRAESDQSSPAGRELRQQASPRAPDDDDDGDGGPDPRGSGTPEGWVLRSGVVPFGRRSSASEVSPEEVRPEAQCTGWNLRPRPRSSASAVSPEARPKAQSAGRNLRPRPRSSASVVSPEARPKAQSAGRNLRPRPRSSASVVSPEARPEAQSAGRNLRPRATPRVPVAPSSTTRSSSDRGSSRAPRSRSRSRSCSTPRLGSDHQRSRKIKMRLDLQVDREPESEAEQEEQELESEPGPSSRPQASRSSSRFAVPGRSSLAAEDSPPRRPVRMRASSPSPPGRLYPLPKHYFEGVHSPSSSSSESSSVSSSHSPLNKAPDPGSSPPLSSLSGPNPFWLALIADLDNLDSSSPRVPGEEIEAAPHTREEEDKKCRG</sequence>
<comment type="function">
    <text evidence="1 3 4">Inhibits PRC2/EED-EZH1 and PRC2/EED-EZH2 complex function by inhibiting EZH1/EZH2 methyltransferase activity, thereby causing down-regulation of histone H3 trimethylation at 'Lys-27' (H3K27me3) (PubMed:31086175). Probably inhibits methyltransferase activity by limiting the stimulatory effect of cofactors such as AEBP2 and JARID2 (By similarity). Inhibits H3K27me3 deposition during spermatogenesis and oogenesis (PubMed:31451685).</text>
</comment>
<comment type="subunit">
    <text evidence="1 3">Interacts with PRC2/EED-EZH1 complex member EZH1 and with PRC2/EED-EZH2 complex member EZH2; the interaction blocks EZH1/EZH2 methyltransferase activity (PubMed:31086175). Interacts (via C-terminus) with SUZ12 which is a member of the PRC2/EED-EZH1 and PRC2/EED-EZH2 complexes (By similarity).</text>
</comment>
<comment type="subcellular location">
    <subcellularLocation>
        <location evidence="1">Nucleus</location>
    </subcellularLocation>
    <subcellularLocation>
        <location evidence="1">Cytoplasm</location>
    </subcellularLocation>
</comment>
<comment type="alternative products">
    <event type="alternative splicing"/>
    <isoform>
        <id>B1B0V2-1</id>
        <name>1</name>
        <sequence type="displayed"/>
    </isoform>
    <isoform>
        <id>B1B0V2-2</id>
        <name>2</name>
        <sequence type="described" ref="VSP_060652"/>
    </isoform>
</comment>
<comment type="tissue specificity">
    <text evidence="4">Highly expressed in ovary with lower expression in testis and very low levels in other tissues tested including prostate, brain, kidney, spleen and liver (PubMed:31451685). During spermatogenesis, expressed mainly in spermatogonia with very low expression in spermatocytes I and II (PubMed:31451685).</text>
</comment>
<comment type="disruption phenotype">
    <text evidence="4">No overt developmental defects with mutant adults appearing indistinguishable from wild-type (PubMed:31451685). Two-fold increase in H3K27me2 and H3K27me3 levels in germ cells in testis but males display normal testis-to-body weight ratio and normal fertility (PubMed:31451685). Increased H3K27me3 levels in postnatal oocytes and slight increase in the number of oocytes with lagging chromosomes (PubMed:31451685). No significant differences in the number of primordial, primary and secondary/antral follicles of pre-pubertal females but older females show a reduced number of follicles at 16 weeks (PubMed:31451685). Females have smaller ovaries and give rise to fewer progeny as they age (PubMed:31451685).</text>
</comment>
<feature type="chain" id="PRO_0000450617" description="EZH inhibitory protein">
    <location>
        <begin position="1"/>
        <end position="589"/>
    </location>
</feature>
<feature type="region of interest" description="Disordered" evidence="2">
    <location>
        <begin position="1"/>
        <end position="46"/>
    </location>
</feature>
<feature type="region of interest" description="Disordered" evidence="2">
    <location>
        <begin position="61"/>
        <end position="548"/>
    </location>
</feature>
<feature type="region of interest" description="Sufficient for interaction with EZH2" evidence="1">
    <location>
        <begin position="482"/>
        <end position="490"/>
    </location>
</feature>
<feature type="region of interest" description="Necessary and sufficient for inhibition of PRC2/EED-EZH1 and PRC2/EED-EZH2 complex activity" evidence="1">
    <location>
        <begin position="484"/>
        <end position="503"/>
    </location>
</feature>
<feature type="region of interest" description="Disordered" evidence="2">
    <location>
        <begin position="561"/>
        <end position="589"/>
    </location>
</feature>
<feature type="compositionally biased region" description="Gly residues" evidence="2">
    <location>
        <begin position="29"/>
        <end position="38"/>
    </location>
</feature>
<feature type="compositionally biased region" description="Gly residues" evidence="2">
    <location>
        <begin position="105"/>
        <end position="114"/>
    </location>
</feature>
<feature type="compositionally biased region" description="Low complexity" evidence="2">
    <location>
        <begin position="147"/>
        <end position="161"/>
    </location>
</feature>
<feature type="compositionally biased region" description="Polar residues" evidence="2">
    <location>
        <begin position="193"/>
        <end position="204"/>
    </location>
</feature>
<feature type="compositionally biased region" description="Low complexity" evidence="2">
    <location>
        <begin position="299"/>
        <end position="308"/>
    </location>
</feature>
<feature type="compositionally biased region" description="Low complexity" evidence="2">
    <location>
        <begin position="325"/>
        <end position="334"/>
    </location>
</feature>
<feature type="compositionally biased region" description="Low complexity" evidence="2">
    <location>
        <begin position="351"/>
        <end position="360"/>
    </location>
</feature>
<feature type="compositionally biased region" description="Low complexity" evidence="2">
    <location>
        <begin position="374"/>
        <end position="390"/>
    </location>
</feature>
<feature type="compositionally biased region" description="Basic and acidic residues" evidence="2">
    <location>
        <begin position="426"/>
        <end position="437"/>
    </location>
</feature>
<feature type="compositionally biased region" description="Acidic residues" evidence="2">
    <location>
        <begin position="438"/>
        <end position="449"/>
    </location>
</feature>
<feature type="compositionally biased region" description="Low complexity" evidence="2">
    <location>
        <begin position="450"/>
        <end position="465"/>
    </location>
</feature>
<feature type="compositionally biased region" description="Low complexity" evidence="2">
    <location>
        <begin position="509"/>
        <end position="547"/>
    </location>
</feature>
<feature type="compositionally biased region" description="Basic and acidic residues" evidence="2">
    <location>
        <begin position="575"/>
        <end position="589"/>
    </location>
</feature>
<feature type="modified residue" description="Phosphoserine" evidence="1">
    <location>
        <position position="306"/>
    </location>
</feature>
<feature type="splice variant" id="VSP_060652" description="In isoform 2.">
    <location>
        <begin position="62"/>
        <end position="182"/>
    </location>
</feature>
<feature type="sequence conflict" description="In Ref. 3; BAE38919." evidence="6" ref="3">
    <original>S</original>
    <variation>G</variation>
    <location>
        <position position="341"/>
    </location>
</feature>
<feature type="sequence conflict" description="In Ref. 4; AAI00378." evidence="6" ref="4">
    <original>P</original>
    <variation>S</variation>
    <location>
        <position position="348"/>
    </location>
</feature>
<dbReference type="EMBL" id="MK321328">
    <property type="protein sequence ID" value="QDN53947.1"/>
    <property type="molecule type" value="mRNA"/>
</dbReference>
<dbReference type="EMBL" id="BX649475">
    <property type="status" value="NOT_ANNOTATED_CDS"/>
    <property type="molecule type" value="Genomic_DNA"/>
</dbReference>
<dbReference type="EMBL" id="AK136005">
    <property type="protein sequence ID" value="BAE22770.1"/>
    <property type="molecule type" value="mRNA"/>
</dbReference>
<dbReference type="EMBL" id="AK166653">
    <property type="protein sequence ID" value="BAE38919.1"/>
    <property type="molecule type" value="mRNA"/>
</dbReference>
<dbReference type="EMBL" id="BC100377">
    <property type="protein sequence ID" value="AAI00378.1"/>
    <property type="molecule type" value="mRNA"/>
</dbReference>
<dbReference type="CCDS" id="CCDS52981.1">
    <molecule id="B1B0V2-1"/>
</dbReference>
<dbReference type="CCDS" id="CCDS52982.1">
    <molecule id="B1B0V2-2"/>
</dbReference>
<dbReference type="RefSeq" id="NP_001028383.2">
    <molecule id="B1B0V2-2"/>
    <property type="nucleotide sequence ID" value="NM_001033211.3"/>
</dbReference>
<dbReference type="RefSeq" id="NP_001159905.1">
    <molecule id="B1B0V2-1"/>
    <property type="nucleotide sequence ID" value="NM_001166433.1"/>
</dbReference>
<dbReference type="FunCoup" id="B1B0V2">
    <property type="interactions" value="73"/>
</dbReference>
<dbReference type="STRING" id="10090.ENSMUSP00000114041"/>
<dbReference type="PhosphoSitePlus" id="B1B0V2"/>
<dbReference type="jPOST" id="B1B0V2"/>
<dbReference type="PaxDb" id="10090-ENSMUSP00000114041"/>
<dbReference type="ProteomicsDB" id="330557">
    <molecule id="B1B0V2-1"/>
</dbReference>
<dbReference type="ProteomicsDB" id="338731"/>
<dbReference type="Ensembl" id="ENSMUST00000101698.4">
    <molecule id="B1B0V2-2"/>
    <property type="protein sequence ID" value="ENSMUSP00000099222.4"/>
    <property type="gene ID" value="ENSMUSG00000073294.5"/>
</dbReference>
<dbReference type="Ensembl" id="ENSMUST00000117544.2">
    <molecule id="B1B0V2-1"/>
    <property type="protein sequence ID" value="ENSMUSP00000114041.2"/>
    <property type="gene ID" value="ENSMUSG00000073294.5"/>
</dbReference>
<dbReference type="GeneID" id="102991"/>
<dbReference type="KEGG" id="mmu:102991"/>
<dbReference type="UCSC" id="uc009skv.2">
    <property type="organism name" value="mouse"/>
</dbReference>
<dbReference type="UCSC" id="uc012hdw.1">
    <molecule id="B1B0V2-1"/>
    <property type="organism name" value="mouse"/>
</dbReference>
<dbReference type="AGR" id="MGI:2147968"/>
<dbReference type="CTD" id="340602"/>
<dbReference type="MGI" id="MGI:2147968">
    <property type="gene designation" value="Ezhip"/>
</dbReference>
<dbReference type="VEuPathDB" id="HostDB:ENSMUSG00000073294"/>
<dbReference type="GeneTree" id="ENSGT00730000112586"/>
<dbReference type="HOGENOM" id="CLU_033305_0_0_1"/>
<dbReference type="InParanoid" id="B1B0V2"/>
<dbReference type="OMA" id="TRETENP"/>
<dbReference type="OrthoDB" id="9639686at2759"/>
<dbReference type="TreeFam" id="TF350538"/>
<dbReference type="BioGRID-ORCS" id="102991">
    <property type="hits" value="2 hits in 76 CRISPR screens"/>
</dbReference>
<dbReference type="PRO" id="PR:B1B0V2"/>
<dbReference type="Proteomes" id="UP000000589">
    <property type="component" value="Chromosome X"/>
</dbReference>
<dbReference type="RNAct" id="B1B0V2">
    <property type="molecule type" value="protein"/>
</dbReference>
<dbReference type="Bgee" id="ENSMUSG00000073294">
    <property type="expression patterns" value="Expressed in animal zygote and 17 other cell types or tissues"/>
</dbReference>
<dbReference type="GO" id="GO:0005737">
    <property type="term" value="C:cytoplasm"/>
    <property type="evidence" value="ECO:0007669"/>
    <property type="project" value="UniProtKB-SubCell"/>
</dbReference>
<dbReference type="GO" id="GO:0005634">
    <property type="term" value="C:nucleus"/>
    <property type="evidence" value="ECO:0007669"/>
    <property type="project" value="UniProtKB-SubCell"/>
</dbReference>
<dbReference type="GO" id="GO:0044877">
    <property type="term" value="F:protein-containing complex binding"/>
    <property type="evidence" value="ECO:0000314"/>
    <property type="project" value="MGI"/>
</dbReference>
<dbReference type="GO" id="GO:0006325">
    <property type="term" value="P:chromatin organization"/>
    <property type="evidence" value="ECO:0000315"/>
    <property type="project" value="MGI"/>
</dbReference>
<dbReference type="GO" id="GO:0048599">
    <property type="term" value="P:oocyte development"/>
    <property type="evidence" value="ECO:0000315"/>
    <property type="project" value="MGI"/>
</dbReference>
<dbReference type="InterPro" id="IPR052882">
    <property type="entry name" value="EZH_Inhibitor"/>
</dbReference>
<dbReference type="PANTHER" id="PTHR22467:SF1">
    <property type="entry name" value="EZH INHIBITORY PROTEIN"/>
    <property type="match status" value="1"/>
</dbReference>
<dbReference type="PANTHER" id="PTHR22467">
    <property type="entry name" value="EZH INHIBITORY PROTEIN-RELATED"/>
    <property type="match status" value="1"/>
</dbReference>